<proteinExistence type="inferred from homology"/>
<name>GD_EHV1A</name>
<sequence>MSTFKLMMDGRLVFAMAIAILSVVLSCGTCEKAKRAVRGRQDRPKEFPPPRYNYTILTRYNATALASPFINDQVKNVDLRIVTATRPCEMIALIAKTNIDSILKELAAAQKTYSARLTWFKIMPTCATPIHDVSYMKCNPKLSFAMCDERSDILWQASLITMAAETDDELGLVLAAPAHSASGLYRRVIEIDGRQIYTDFSVTIPSERCPIAFEQNFGNPDRCKTPEQYSRGEVFTRRFLGEFNFPQGEHMTWLKFWFVYDGGNLPVQFYEAQAFARPVPPDNHPGFDSVESEITQNKTDPKPGQADPKPNQPFKWPSIKHLAPRLDEVDEVIEPVTKPPKTSKSNSTFVGISVGLGIAGLVLVGVILYVCLRRKKELKKSAQNGLTRLRSTFKDVKYTQLP</sequence>
<organismHost>
    <name type="scientific">Equus caballus</name>
    <name type="common">Horse</name>
    <dbReference type="NCBI Taxonomy" id="9796"/>
</organismHost>
<feature type="signal peptide" evidence="4">
    <location>
        <begin position="1"/>
        <end position="30"/>
    </location>
</feature>
<feature type="chain" id="PRO_0000038221" description="Envelope glycoprotein D">
    <location>
        <begin position="31"/>
        <end position="402"/>
    </location>
</feature>
<feature type="topological domain" description="Virion surface" evidence="4">
    <location>
        <begin position="31"/>
        <end position="355"/>
    </location>
</feature>
<feature type="transmembrane region" description="Helical" evidence="4">
    <location>
        <begin position="356"/>
        <end position="372"/>
    </location>
</feature>
<feature type="topological domain" description="Intravirion" evidence="4">
    <location>
        <begin position="373"/>
        <end position="402"/>
    </location>
</feature>
<feature type="region of interest" description="Disordered" evidence="5">
    <location>
        <begin position="281"/>
        <end position="315"/>
    </location>
</feature>
<feature type="glycosylation site" description="N-linked (GlcNAc...) asparagine; by host" evidence="4">
    <location>
        <position position="53"/>
    </location>
</feature>
<feature type="glycosylation site" description="N-linked (GlcNAc...) asparagine; by host" evidence="4">
    <location>
        <position position="61"/>
    </location>
</feature>
<feature type="glycosylation site" description="N-linked (GlcNAc...) asparagine; by host" evidence="4">
    <location>
        <position position="297"/>
    </location>
</feature>
<feature type="glycosylation site" description="N-linked (GlcNAc...) asparagine; by host" evidence="4">
    <location>
        <position position="346"/>
    </location>
</feature>
<feature type="disulfide bond" evidence="1">
    <location>
        <begin position="88"/>
        <end position="209"/>
    </location>
</feature>
<feature type="disulfide bond" evidence="1">
    <location>
        <begin position="126"/>
        <end position="223"/>
    </location>
</feature>
<feature type="disulfide bond" evidence="1">
    <location>
        <begin position="138"/>
        <end position="147"/>
    </location>
</feature>
<reference key="1">
    <citation type="journal article" date="1992" name="J. Gen. Virol.">
        <title>Identification of the equine herpesvirus type 1 glycoprotein 17/18 as a homologue of herpes simplex virus glycoprotein D.</title>
        <authorList>
            <person name="Elton D.M."/>
            <person name="Halliburton I.W."/>
            <person name="Killington R.A."/>
            <person name="Meredith D.M."/>
            <person name="Bonass W.A."/>
        </authorList>
    </citation>
    <scope>NUCLEOTIDE SEQUENCE [GENOMIC DNA]</scope>
</reference>
<reference key="2">
    <citation type="journal article" date="1991" name="Gene">
        <title>Sequence analysis of the 4.7-kb BamHI-EcoRI fragment of the equine herpesvirus type-1 short unique region.</title>
        <authorList>
            <person name="Elton D.M."/>
            <person name="Halliburton I.W."/>
            <person name="Killington R.A."/>
            <person name="Meredith D.M."/>
            <person name="Bonass W.A."/>
        </authorList>
    </citation>
    <scope>NUCLEOTIDE SEQUENCE [GENOMIC DNA] OF 242-402</scope>
</reference>
<accession>P24872</accession>
<protein>
    <recommendedName>
        <fullName>Envelope glycoprotein D</fullName>
        <shortName>gD</shortName>
    </recommendedName>
    <alternativeName>
        <fullName>Glycoprotein 17/18</fullName>
    </alternativeName>
</protein>
<gene>
    <name type="primary">gD</name>
    <name type="synonym">GP17/18</name>
</gene>
<organism>
    <name type="scientific">Equine herpesvirus 1 (strain AB1)</name>
    <name type="common">EHV-1</name>
    <name type="synonym">Equine abortion virus</name>
    <dbReference type="NCBI Taxonomy" id="10328"/>
    <lineage>
        <taxon>Viruses</taxon>
        <taxon>Duplodnaviria</taxon>
        <taxon>Heunggongvirae</taxon>
        <taxon>Peploviricota</taxon>
        <taxon>Herviviricetes</taxon>
        <taxon>Herpesvirales</taxon>
        <taxon>Orthoherpesviridae</taxon>
        <taxon>Alphaherpesvirinae</taxon>
        <taxon>Varicellovirus</taxon>
        <taxon>Varicellovirus equidalpha1</taxon>
        <taxon>Equid alphaherpesvirus 1</taxon>
    </lineage>
</organism>
<comment type="function">
    <text evidence="2">Envelope glycoprotein that binds to host cell entry receptors, promoting the virus entry into host cells. May trigger fusion with host membrane, by recruiting the fusion machinery composed of gB and gH/gL (By similarity).</text>
</comment>
<comment type="subcellular location">
    <subcellularLocation>
        <location evidence="2">Virion membrane</location>
        <topology evidence="2">Single-pass type I membrane protein</topology>
    </subcellularLocation>
    <text evidence="3">During virion morphogenesis, this protein probably accumulates in the endosomes and trans-Golgi where secondary envelopment occurs.</text>
</comment>
<comment type="similarity">
    <text evidence="6">Belongs to the herpesviridae glycoprotein D family.</text>
</comment>
<evidence type="ECO:0000250" key="1">
    <source>
        <dbReference type="UniProtKB" id="P57083"/>
    </source>
</evidence>
<evidence type="ECO:0000250" key="2">
    <source>
        <dbReference type="UniProtKB" id="Q05059"/>
    </source>
</evidence>
<evidence type="ECO:0000250" key="3">
    <source>
        <dbReference type="UniProtKB" id="Q69091"/>
    </source>
</evidence>
<evidence type="ECO:0000255" key="4"/>
<evidence type="ECO:0000256" key="5">
    <source>
        <dbReference type="SAM" id="MobiDB-lite"/>
    </source>
</evidence>
<evidence type="ECO:0000305" key="6"/>
<keyword id="KW-1015">Disulfide bond</keyword>
<keyword id="KW-0325">Glycoprotein</keyword>
<keyword id="KW-0945">Host-virus interaction</keyword>
<keyword id="KW-0472">Membrane</keyword>
<keyword id="KW-0732">Signal</keyword>
<keyword id="KW-0812">Transmembrane</keyword>
<keyword id="KW-1133">Transmembrane helix</keyword>
<keyword id="KW-1161">Viral attachment to host cell</keyword>
<keyword id="KW-1234">Viral attachment to host entry receptor</keyword>
<keyword id="KW-0261">Viral envelope protein</keyword>
<keyword id="KW-0946">Virion</keyword>
<keyword id="KW-1160">Virus entry into host cell</keyword>
<dbReference type="EMBL" id="M60946">
    <property type="protein sequence ID" value="AAA46087.1"/>
    <property type="molecule type" value="Genomic_DNA"/>
</dbReference>
<dbReference type="EMBL" id="M36299">
    <property type="protein sequence ID" value="AAA66546.1"/>
    <property type="molecule type" value="Genomic_DNA"/>
</dbReference>
<dbReference type="SMR" id="P24872"/>
<dbReference type="GlyCosmos" id="P24872">
    <property type="glycosylation" value="4 sites, No reported glycans"/>
</dbReference>
<dbReference type="GO" id="GO:0016020">
    <property type="term" value="C:membrane"/>
    <property type="evidence" value="ECO:0007669"/>
    <property type="project" value="UniProtKB-KW"/>
</dbReference>
<dbReference type="GO" id="GO:0019031">
    <property type="term" value="C:viral envelope"/>
    <property type="evidence" value="ECO:0007669"/>
    <property type="project" value="UniProtKB-KW"/>
</dbReference>
<dbReference type="GO" id="GO:0055036">
    <property type="term" value="C:virion membrane"/>
    <property type="evidence" value="ECO:0007669"/>
    <property type="project" value="UniProtKB-SubCell"/>
</dbReference>
<dbReference type="GO" id="GO:0098670">
    <property type="term" value="P:entry receptor-mediated virion attachment to host cell"/>
    <property type="evidence" value="ECO:0007669"/>
    <property type="project" value="UniProtKB-KW"/>
</dbReference>
<dbReference type="GO" id="GO:0046718">
    <property type="term" value="P:symbiont entry into host cell"/>
    <property type="evidence" value="ECO:0007669"/>
    <property type="project" value="UniProtKB-KW"/>
</dbReference>
<dbReference type="CDD" id="cd12087">
    <property type="entry name" value="TM_EGFR-like"/>
    <property type="match status" value="1"/>
</dbReference>
<dbReference type="Gene3D" id="2.70.230.10">
    <property type="match status" value="1"/>
</dbReference>
<dbReference type="InterPro" id="IPR002896">
    <property type="entry name" value="Herpes_glycop_dom"/>
</dbReference>
<dbReference type="InterPro" id="IPR036179">
    <property type="entry name" value="Ig-like_dom_sf"/>
</dbReference>
<dbReference type="Pfam" id="PF01537">
    <property type="entry name" value="Herpes_glycop_D"/>
    <property type="match status" value="1"/>
</dbReference>
<dbReference type="SUPFAM" id="SSF48726">
    <property type="entry name" value="Immunoglobulin"/>
    <property type="match status" value="1"/>
</dbReference>